<name>SPRT_SALTY</name>
<proteinExistence type="inferred from homology"/>
<accession>P60190</accession>
<accession>Q8XEU9</accession>
<comment type="cofactor">
    <cofactor evidence="2">
        <name>Zn(2+)</name>
        <dbReference type="ChEBI" id="CHEBI:29105"/>
    </cofactor>
    <text evidence="2">Binds 1 zinc ion.</text>
</comment>
<comment type="subcellular location">
    <subcellularLocation>
        <location evidence="2">Cytoplasm</location>
    </subcellularLocation>
</comment>
<comment type="similarity">
    <text evidence="2">Belongs to the SprT family.</text>
</comment>
<keyword id="KW-0963">Cytoplasm</keyword>
<keyword id="KW-0479">Metal-binding</keyword>
<keyword id="KW-1185">Reference proteome</keyword>
<keyword id="KW-0862">Zinc</keyword>
<feature type="chain" id="PRO_0000213277" description="Protein SprT">
    <location>
        <begin position="1"/>
        <end position="165"/>
    </location>
</feature>
<feature type="domain" description="SprT-like">
    <location>
        <begin position="22"/>
        <end position="163"/>
    </location>
</feature>
<feature type="active site" evidence="1">
    <location>
        <position position="79"/>
    </location>
</feature>
<feature type="binding site" evidence="1">
    <location>
        <position position="78"/>
    </location>
    <ligand>
        <name>Zn(2+)</name>
        <dbReference type="ChEBI" id="CHEBI:29105"/>
    </ligand>
</feature>
<feature type="binding site" evidence="1">
    <location>
        <position position="82"/>
    </location>
    <ligand>
        <name>Zn(2+)</name>
        <dbReference type="ChEBI" id="CHEBI:29105"/>
    </ligand>
</feature>
<gene>
    <name type="primary">sprT</name>
    <name type="ordered locus">STM3092</name>
</gene>
<organism>
    <name type="scientific">Salmonella typhimurium (strain LT2 / SGSC1412 / ATCC 700720)</name>
    <dbReference type="NCBI Taxonomy" id="99287"/>
    <lineage>
        <taxon>Bacteria</taxon>
        <taxon>Pseudomonadati</taxon>
        <taxon>Pseudomonadota</taxon>
        <taxon>Gammaproteobacteria</taxon>
        <taxon>Enterobacterales</taxon>
        <taxon>Enterobacteriaceae</taxon>
        <taxon>Salmonella</taxon>
    </lineage>
</organism>
<protein>
    <recommendedName>
        <fullName>Protein SprT</fullName>
    </recommendedName>
</protein>
<sequence length="165" mass="19243">MKTPRLPIAIQQAVMRRLRENLAQANLKLDRHYPEPKLVYTQRGTSAGTAWLESYEIRLNPVLLLENIDTFIAEVVPHELAHLLVWKHFGRKAPHGKEWKWMMESVLGVPARRTHQFALQSVRRNTFPYHCQCQQHQLTVRRHNRVVRGEAVYRCVHCGEPLVAG</sequence>
<dbReference type="EMBL" id="AE006468">
    <property type="protein sequence ID" value="AAL21967.1"/>
    <property type="molecule type" value="Genomic_DNA"/>
</dbReference>
<dbReference type="RefSeq" id="NP_462008.1">
    <property type="nucleotide sequence ID" value="NC_003197.2"/>
</dbReference>
<dbReference type="RefSeq" id="WP_000856775.1">
    <property type="nucleotide sequence ID" value="NC_003197.2"/>
</dbReference>
<dbReference type="STRING" id="99287.STM3092"/>
<dbReference type="PaxDb" id="99287-STM3092"/>
<dbReference type="GeneID" id="1254615"/>
<dbReference type="KEGG" id="stm:STM3092"/>
<dbReference type="PATRIC" id="fig|99287.12.peg.3277"/>
<dbReference type="HOGENOM" id="CLU_113336_0_1_6"/>
<dbReference type="OMA" id="QPHGEEW"/>
<dbReference type="PhylomeDB" id="P60190"/>
<dbReference type="BioCyc" id="SENT99287:STM3092-MONOMER"/>
<dbReference type="Proteomes" id="UP000001014">
    <property type="component" value="Chromosome"/>
</dbReference>
<dbReference type="GO" id="GO:0005737">
    <property type="term" value="C:cytoplasm"/>
    <property type="evidence" value="ECO:0007669"/>
    <property type="project" value="UniProtKB-SubCell"/>
</dbReference>
<dbReference type="GO" id="GO:0008270">
    <property type="term" value="F:zinc ion binding"/>
    <property type="evidence" value="ECO:0007669"/>
    <property type="project" value="UniProtKB-UniRule"/>
</dbReference>
<dbReference type="GO" id="GO:0006950">
    <property type="term" value="P:response to stress"/>
    <property type="evidence" value="ECO:0007669"/>
    <property type="project" value="UniProtKB-ARBA"/>
</dbReference>
<dbReference type="HAMAP" id="MF_00746">
    <property type="entry name" value="SprT"/>
    <property type="match status" value="1"/>
</dbReference>
<dbReference type="InterPro" id="IPR006640">
    <property type="entry name" value="SprT-like_domain"/>
</dbReference>
<dbReference type="InterPro" id="IPR035240">
    <property type="entry name" value="SprT_Zn_ribbon"/>
</dbReference>
<dbReference type="InterPro" id="IPR023483">
    <property type="entry name" value="Uncharacterised_SprT"/>
</dbReference>
<dbReference type="NCBIfam" id="NF003421">
    <property type="entry name" value="PRK04860.1"/>
    <property type="match status" value="1"/>
</dbReference>
<dbReference type="PANTHER" id="PTHR38773">
    <property type="entry name" value="PROTEIN SPRT"/>
    <property type="match status" value="1"/>
</dbReference>
<dbReference type="PANTHER" id="PTHR38773:SF1">
    <property type="entry name" value="PROTEIN SPRT"/>
    <property type="match status" value="1"/>
</dbReference>
<dbReference type="Pfam" id="PF10263">
    <property type="entry name" value="SprT-like"/>
    <property type="match status" value="1"/>
</dbReference>
<dbReference type="Pfam" id="PF17283">
    <property type="entry name" value="Zn_ribbon_SprT"/>
    <property type="match status" value="1"/>
</dbReference>
<dbReference type="SMART" id="SM00731">
    <property type="entry name" value="SprT"/>
    <property type="match status" value="1"/>
</dbReference>
<dbReference type="PROSITE" id="PS00142">
    <property type="entry name" value="ZINC_PROTEASE"/>
    <property type="match status" value="1"/>
</dbReference>
<reference key="1">
    <citation type="journal article" date="2001" name="Nature">
        <title>Complete genome sequence of Salmonella enterica serovar Typhimurium LT2.</title>
        <authorList>
            <person name="McClelland M."/>
            <person name="Sanderson K.E."/>
            <person name="Spieth J."/>
            <person name="Clifton S.W."/>
            <person name="Latreille P."/>
            <person name="Courtney L."/>
            <person name="Porwollik S."/>
            <person name="Ali J."/>
            <person name="Dante M."/>
            <person name="Du F."/>
            <person name="Hou S."/>
            <person name="Layman D."/>
            <person name="Leonard S."/>
            <person name="Nguyen C."/>
            <person name="Scott K."/>
            <person name="Holmes A."/>
            <person name="Grewal N."/>
            <person name="Mulvaney E."/>
            <person name="Ryan E."/>
            <person name="Sun H."/>
            <person name="Florea L."/>
            <person name="Miller W."/>
            <person name="Stoneking T."/>
            <person name="Nhan M."/>
            <person name="Waterston R."/>
            <person name="Wilson R.K."/>
        </authorList>
    </citation>
    <scope>NUCLEOTIDE SEQUENCE [LARGE SCALE GENOMIC DNA]</scope>
    <source>
        <strain>LT2 / SGSC1412 / ATCC 700720</strain>
    </source>
</reference>
<evidence type="ECO:0000255" key="1"/>
<evidence type="ECO:0000305" key="2"/>